<feature type="chain" id="PRO_1000131994" description="Aspartate/glutamate leucyltransferase">
    <location>
        <begin position="1"/>
        <end position="258"/>
    </location>
</feature>
<comment type="function">
    <text evidence="1">Functions in the N-end rule pathway of protein degradation where it conjugates Leu from its aminoacyl-tRNA to the N-termini of proteins containing an N-terminal aspartate or glutamate.</text>
</comment>
<comment type="catalytic activity">
    <reaction evidence="1">
        <text>N-terminal L-glutamyl-[protein] + L-leucyl-tRNA(Leu) = N-terminal L-leucyl-L-glutamyl-[protein] + tRNA(Leu) + H(+)</text>
        <dbReference type="Rhea" id="RHEA:50412"/>
        <dbReference type="Rhea" id="RHEA-COMP:9613"/>
        <dbReference type="Rhea" id="RHEA-COMP:9622"/>
        <dbReference type="Rhea" id="RHEA-COMP:12664"/>
        <dbReference type="Rhea" id="RHEA-COMP:12668"/>
        <dbReference type="ChEBI" id="CHEBI:15378"/>
        <dbReference type="ChEBI" id="CHEBI:64721"/>
        <dbReference type="ChEBI" id="CHEBI:78442"/>
        <dbReference type="ChEBI" id="CHEBI:78494"/>
        <dbReference type="ChEBI" id="CHEBI:133041"/>
        <dbReference type="EC" id="2.3.2.29"/>
    </reaction>
</comment>
<comment type="catalytic activity">
    <reaction evidence="1">
        <text>N-terminal L-aspartyl-[protein] + L-leucyl-tRNA(Leu) = N-terminal L-leucyl-L-aspartyl-[protein] + tRNA(Leu) + H(+)</text>
        <dbReference type="Rhea" id="RHEA:50420"/>
        <dbReference type="Rhea" id="RHEA-COMP:9613"/>
        <dbReference type="Rhea" id="RHEA-COMP:9622"/>
        <dbReference type="Rhea" id="RHEA-COMP:12669"/>
        <dbReference type="Rhea" id="RHEA-COMP:12674"/>
        <dbReference type="ChEBI" id="CHEBI:15378"/>
        <dbReference type="ChEBI" id="CHEBI:64720"/>
        <dbReference type="ChEBI" id="CHEBI:78442"/>
        <dbReference type="ChEBI" id="CHEBI:78494"/>
        <dbReference type="ChEBI" id="CHEBI:133042"/>
        <dbReference type="EC" id="2.3.2.29"/>
    </reaction>
</comment>
<comment type="subcellular location">
    <subcellularLocation>
        <location evidence="1">Cytoplasm</location>
    </subcellularLocation>
</comment>
<comment type="similarity">
    <text evidence="1">Belongs to the R-transferase family. Bpt subfamily.</text>
</comment>
<keyword id="KW-0012">Acyltransferase</keyword>
<keyword id="KW-0963">Cytoplasm</keyword>
<keyword id="KW-1185">Reference proteome</keyword>
<keyword id="KW-0808">Transferase</keyword>
<accession>B5ZX28</accession>
<organism>
    <name type="scientific">Rhizobium leguminosarum bv. trifolii (strain WSM2304)</name>
    <dbReference type="NCBI Taxonomy" id="395492"/>
    <lineage>
        <taxon>Bacteria</taxon>
        <taxon>Pseudomonadati</taxon>
        <taxon>Pseudomonadota</taxon>
        <taxon>Alphaproteobacteria</taxon>
        <taxon>Hyphomicrobiales</taxon>
        <taxon>Rhizobiaceae</taxon>
        <taxon>Rhizobium/Agrobacterium group</taxon>
        <taxon>Rhizobium</taxon>
    </lineage>
</organism>
<reference key="1">
    <citation type="journal article" date="2010" name="Stand. Genomic Sci.">
        <title>Complete genome sequence of Rhizobium leguminosarum bv trifolii strain WSM2304, an effective microsymbiont of the South American clover Trifolium polymorphum.</title>
        <authorList>
            <person name="Reeve W."/>
            <person name="O'Hara G."/>
            <person name="Chain P."/>
            <person name="Ardley J."/>
            <person name="Brau L."/>
            <person name="Nandesena K."/>
            <person name="Tiwari R."/>
            <person name="Malfatti S."/>
            <person name="Kiss H."/>
            <person name="Lapidus A."/>
            <person name="Copeland A."/>
            <person name="Nolan M."/>
            <person name="Land M."/>
            <person name="Ivanova N."/>
            <person name="Mavromatis K."/>
            <person name="Markowitz V."/>
            <person name="Kyrpides N."/>
            <person name="Melino V."/>
            <person name="Denton M."/>
            <person name="Yates R."/>
            <person name="Howieson J."/>
        </authorList>
    </citation>
    <scope>NUCLEOTIDE SEQUENCE [LARGE SCALE GENOMIC DNA]</scope>
    <source>
        <strain>WSM2304</strain>
    </source>
</reference>
<dbReference type="EC" id="2.3.2.29" evidence="1"/>
<dbReference type="EMBL" id="CP001191">
    <property type="protein sequence ID" value="ACI54405.1"/>
    <property type="molecule type" value="Genomic_DNA"/>
</dbReference>
<dbReference type="RefSeq" id="WP_012557208.1">
    <property type="nucleotide sequence ID" value="NC_011369.1"/>
</dbReference>
<dbReference type="SMR" id="B5ZX28"/>
<dbReference type="STRING" id="395492.Rleg2_1111"/>
<dbReference type="KEGG" id="rlt:Rleg2_1111"/>
<dbReference type="eggNOG" id="COG2935">
    <property type="taxonomic scope" value="Bacteria"/>
</dbReference>
<dbReference type="HOGENOM" id="CLU_077607_1_0_5"/>
<dbReference type="Proteomes" id="UP000008330">
    <property type="component" value="Chromosome"/>
</dbReference>
<dbReference type="GO" id="GO:0005737">
    <property type="term" value="C:cytoplasm"/>
    <property type="evidence" value="ECO:0007669"/>
    <property type="project" value="UniProtKB-SubCell"/>
</dbReference>
<dbReference type="GO" id="GO:0004057">
    <property type="term" value="F:arginyl-tRNA--protein transferase activity"/>
    <property type="evidence" value="ECO:0007669"/>
    <property type="project" value="InterPro"/>
</dbReference>
<dbReference type="GO" id="GO:0008914">
    <property type="term" value="F:leucyl-tRNA--protein transferase activity"/>
    <property type="evidence" value="ECO:0007669"/>
    <property type="project" value="UniProtKB-UniRule"/>
</dbReference>
<dbReference type="GO" id="GO:0071596">
    <property type="term" value="P:ubiquitin-dependent protein catabolic process via the N-end rule pathway"/>
    <property type="evidence" value="ECO:0007669"/>
    <property type="project" value="InterPro"/>
</dbReference>
<dbReference type="HAMAP" id="MF_00689">
    <property type="entry name" value="Bpt"/>
    <property type="match status" value="1"/>
</dbReference>
<dbReference type="InterPro" id="IPR016181">
    <property type="entry name" value="Acyl_CoA_acyltransferase"/>
</dbReference>
<dbReference type="InterPro" id="IPR017138">
    <property type="entry name" value="Asp_Glu_LeuTrfase"/>
</dbReference>
<dbReference type="InterPro" id="IPR030700">
    <property type="entry name" value="N-end_Aminoacyl_Trfase"/>
</dbReference>
<dbReference type="InterPro" id="IPR007472">
    <property type="entry name" value="N-end_Aminoacyl_Trfase_C"/>
</dbReference>
<dbReference type="InterPro" id="IPR007471">
    <property type="entry name" value="N-end_Aminoacyl_Trfase_N"/>
</dbReference>
<dbReference type="NCBIfam" id="NF002342">
    <property type="entry name" value="PRK01305.1-3"/>
    <property type="match status" value="1"/>
</dbReference>
<dbReference type="NCBIfam" id="NF002343">
    <property type="entry name" value="PRK01305.1-4"/>
    <property type="match status" value="1"/>
</dbReference>
<dbReference type="NCBIfam" id="NF002346">
    <property type="entry name" value="PRK01305.2-3"/>
    <property type="match status" value="1"/>
</dbReference>
<dbReference type="PANTHER" id="PTHR21367">
    <property type="entry name" value="ARGININE-TRNA-PROTEIN TRANSFERASE 1"/>
    <property type="match status" value="1"/>
</dbReference>
<dbReference type="PANTHER" id="PTHR21367:SF1">
    <property type="entry name" value="ARGINYL-TRNA--PROTEIN TRANSFERASE 1"/>
    <property type="match status" value="1"/>
</dbReference>
<dbReference type="Pfam" id="PF04377">
    <property type="entry name" value="ATE_C"/>
    <property type="match status" value="1"/>
</dbReference>
<dbReference type="Pfam" id="PF04376">
    <property type="entry name" value="ATE_N"/>
    <property type="match status" value="1"/>
</dbReference>
<dbReference type="PIRSF" id="PIRSF037208">
    <property type="entry name" value="ATE_pro_prd"/>
    <property type="match status" value="1"/>
</dbReference>
<dbReference type="SUPFAM" id="SSF55729">
    <property type="entry name" value="Acyl-CoA N-acyltransferases (Nat)"/>
    <property type="match status" value="1"/>
</dbReference>
<protein>
    <recommendedName>
        <fullName evidence="1">Aspartate/glutamate leucyltransferase</fullName>
        <ecNumber evidence="1">2.3.2.29</ecNumber>
    </recommendedName>
</protein>
<name>BPT_RHILW</name>
<sequence length="258" mass="29570">MNTQTTPSPQFYLTAPAACPYLPHEMERKVFTHLVGPRAAEMNDILTQGGFRRSQNIAYRPACESCRACVSVRILAQEFEPTKSMKRVLAANSDVIATEFTAQPSSEQYSLFRRYLDFRHQQGGMSDMTVLDYAIMVEDTHVNTRIVEYRRREEGSGLEQRPTGELLAAALTDTMSDGLSMVYSYFNPDLERRSLGTFMILDHVRRAKALGLPHVYLGYWVQGSRKMDYKTRFQPQEHLTPRGWERFDPSSMPESPHD</sequence>
<proteinExistence type="inferred from homology"/>
<evidence type="ECO:0000255" key="1">
    <source>
        <dbReference type="HAMAP-Rule" id="MF_00689"/>
    </source>
</evidence>
<gene>
    <name evidence="1" type="primary">bpt</name>
    <name type="ordered locus">Rleg2_1111</name>
</gene>